<dbReference type="EC" id="2.4.1.16" evidence="8"/>
<dbReference type="EMBL" id="HG970332">
    <property type="protein sequence ID" value="CEF73377.1"/>
    <property type="molecule type" value="Genomic_DNA"/>
</dbReference>
<dbReference type="FunCoup" id="A0A0E0RQ52">
    <property type="interactions" value="76"/>
</dbReference>
<dbReference type="STRING" id="229533.A0A0E0RQ52"/>
<dbReference type="VEuPathDB" id="FungiDB:FGRAMPH1_01G03149"/>
<dbReference type="eggNOG" id="KOG2571">
    <property type="taxonomic scope" value="Eukaryota"/>
</dbReference>
<dbReference type="InParanoid" id="A0A0E0RQ52"/>
<dbReference type="Proteomes" id="UP000070720">
    <property type="component" value="Chromosome 1"/>
</dbReference>
<dbReference type="GO" id="GO:0030428">
    <property type="term" value="C:cell septum"/>
    <property type="evidence" value="ECO:0007669"/>
    <property type="project" value="TreeGrafter"/>
</dbReference>
<dbReference type="GO" id="GO:0005886">
    <property type="term" value="C:plasma membrane"/>
    <property type="evidence" value="ECO:0007669"/>
    <property type="project" value="UniProtKB-SubCell"/>
</dbReference>
<dbReference type="GO" id="GO:0004100">
    <property type="term" value="F:chitin synthase activity"/>
    <property type="evidence" value="ECO:0007669"/>
    <property type="project" value="UniProtKB-EC"/>
</dbReference>
<dbReference type="GO" id="GO:0006031">
    <property type="term" value="P:chitin biosynthetic process"/>
    <property type="evidence" value="ECO:0007669"/>
    <property type="project" value="TreeGrafter"/>
</dbReference>
<dbReference type="CDD" id="cd04190">
    <property type="entry name" value="Chitin_synth_C"/>
    <property type="match status" value="1"/>
</dbReference>
<dbReference type="Gene3D" id="3.90.550.10">
    <property type="entry name" value="Spore Coat Polysaccharide Biosynthesis Protein SpsA, Chain A"/>
    <property type="match status" value="1"/>
</dbReference>
<dbReference type="InterPro" id="IPR004835">
    <property type="entry name" value="Chitin_synth"/>
</dbReference>
<dbReference type="InterPro" id="IPR054295">
    <property type="entry name" value="CHS4-like_dom"/>
</dbReference>
<dbReference type="InterPro" id="IPR029044">
    <property type="entry name" value="Nucleotide-diphossugar_trans"/>
</dbReference>
<dbReference type="PANTHER" id="PTHR22914">
    <property type="entry name" value="CHITIN SYNTHASE"/>
    <property type="match status" value="1"/>
</dbReference>
<dbReference type="PANTHER" id="PTHR22914:SF16">
    <property type="entry name" value="CHITIN SYNTHASE 3"/>
    <property type="match status" value="1"/>
</dbReference>
<dbReference type="Pfam" id="PF03142">
    <property type="entry name" value="Chitin_synth_2"/>
    <property type="match status" value="1"/>
</dbReference>
<dbReference type="Pfam" id="PF22997">
    <property type="entry name" value="CHS4"/>
    <property type="match status" value="1"/>
</dbReference>
<dbReference type="SUPFAM" id="SSF53448">
    <property type="entry name" value="Nucleotide-diphospho-sugar transferases"/>
    <property type="match status" value="1"/>
</dbReference>
<comment type="function">
    <text evidence="5 8">Polymerizes chitin, a structural polymer of the cell wall and septum, by transferring the sugar moiety of UDP-GlcNAc to the non-reducing end of the growing chitin polymer (Probable). Shows additive effects in septum formation with CHS1, CHS2, CHS3A, CHS5, CHS6 and CHS7 (PubMed:27725723). Regulates conidiation (PubMed:27725723). Involved in virulence and mediates mycotoxin deoxinivalenol (DON) biosynthesis via the regulation of the expression of TRI4, TRI5 and TRI6 (PubMed:27725723).</text>
</comment>
<comment type="catalytic activity">
    <reaction evidence="8">
        <text>[(1-&gt;4)-N-acetyl-beta-D-glucosaminyl](n) + UDP-N-acetyl-alpha-D-glucosamine = [(1-&gt;4)-N-acetyl-beta-D-glucosaminyl](n+1) + UDP + H(+)</text>
        <dbReference type="Rhea" id="RHEA:16637"/>
        <dbReference type="Rhea" id="RHEA-COMP:9593"/>
        <dbReference type="Rhea" id="RHEA-COMP:9595"/>
        <dbReference type="ChEBI" id="CHEBI:15378"/>
        <dbReference type="ChEBI" id="CHEBI:17029"/>
        <dbReference type="ChEBI" id="CHEBI:57705"/>
        <dbReference type="ChEBI" id="CHEBI:58223"/>
        <dbReference type="EC" id="2.4.1.16"/>
    </reaction>
    <physiologicalReaction direction="left-to-right" evidence="8">
        <dbReference type="Rhea" id="RHEA:16638"/>
    </physiologicalReaction>
</comment>
<comment type="subcellular location">
    <subcellularLocation>
        <location evidence="7">Cell membrane</location>
        <topology evidence="1">Multi-pass membrane protein</topology>
    </subcellularLocation>
</comment>
<comment type="induction">
    <text evidence="5">Exhibits higher expression levels in hyphae than in germinating conidia (PubMed:27725723). Expression is increased in the absence of chitin synthase CHS2 (PubMed:27725723).</text>
</comment>
<comment type="disruption phenotype">
    <text evidence="4">Does not affect mycelial growth nor sensitivity to various stresses.</text>
</comment>
<comment type="similarity">
    <text evidence="7">Belongs to the chitin synthase family. Class IV subfamily.</text>
</comment>
<protein>
    <recommendedName>
        <fullName evidence="6">Chitin synthase 4</fullName>
        <ecNumber evidence="8">2.4.1.16</ecNumber>
    </recommendedName>
    <alternativeName>
        <fullName evidence="7">Chitin-UDP acetyl-glucosaminyl transferase 4</fullName>
    </alternativeName>
    <alternativeName>
        <fullName evidence="6">Class-IV chitin synthase 4</fullName>
    </alternativeName>
</protein>
<reference key="1">
    <citation type="journal article" date="2007" name="Science">
        <title>The Fusarium graminearum genome reveals a link between localized polymorphism and pathogen specialization.</title>
        <authorList>
            <person name="Cuomo C.A."/>
            <person name="Gueldener U."/>
            <person name="Xu J.-R."/>
            <person name="Trail F."/>
            <person name="Turgeon B.G."/>
            <person name="Di Pietro A."/>
            <person name="Walton J.D."/>
            <person name="Ma L.-J."/>
            <person name="Baker S.E."/>
            <person name="Rep M."/>
            <person name="Adam G."/>
            <person name="Antoniw J."/>
            <person name="Baldwin T."/>
            <person name="Calvo S.E."/>
            <person name="Chang Y.-L."/>
            <person name="DeCaprio D."/>
            <person name="Gale L.R."/>
            <person name="Gnerre S."/>
            <person name="Goswami R.S."/>
            <person name="Hammond-Kosack K."/>
            <person name="Harris L.J."/>
            <person name="Hilburn K."/>
            <person name="Kennell J.C."/>
            <person name="Kroken S."/>
            <person name="Magnuson J.K."/>
            <person name="Mannhaupt G."/>
            <person name="Mauceli E.W."/>
            <person name="Mewes H.-W."/>
            <person name="Mitterbauer R."/>
            <person name="Muehlbauer G."/>
            <person name="Muensterkoetter M."/>
            <person name="Nelson D."/>
            <person name="O'Donnell K."/>
            <person name="Ouellet T."/>
            <person name="Qi W."/>
            <person name="Quesneville H."/>
            <person name="Roncero M.I.G."/>
            <person name="Seong K.-Y."/>
            <person name="Tetko I.V."/>
            <person name="Urban M."/>
            <person name="Waalwijk C."/>
            <person name="Ward T.J."/>
            <person name="Yao J."/>
            <person name="Birren B.W."/>
            <person name="Kistler H.C."/>
        </authorList>
    </citation>
    <scope>NUCLEOTIDE SEQUENCE [LARGE SCALE GENOMIC DNA]</scope>
    <source>
        <strain>ATCC MYA-4620 / CBS 123657 / FGSC 9075 / NRRL 31084 / PH-1</strain>
    </source>
</reference>
<reference key="2">
    <citation type="journal article" date="2010" name="Nature">
        <title>Comparative genomics reveals mobile pathogenicity chromosomes in Fusarium.</title>
        <authorList>
            <person name="Ma L.-J."/>
            <person name="van der Does H.C."/>
            <person name="Borkovich K.A."/>
            <person name="Coleman J.J."/>
            <person name="Daboussi M.-J."/>
            <person name="Di Pietro A."/>
            <person name="Dufresne M."/>
            <person name="Freitag M."/>
            <person name="Grabherr M."/>
            <person name="Henrissat B."/>
            <person name="Houterman P.M."/>
            <person name="Kang S."/>
            <person name="Shim W.-B."/>
            <person name="Woloshuk C."/>
            <person name="Xie X."/>
            <person name="Xu J.-R."/>
            <person name="Antoniw J."/>
            <person name="Baker S.E."/>
            <person name="Bluhm B.H."/>
            <person name="Breakspear A."/>
            <person name="Brown D.W."/>
            <person name="Butchko R.A.E."/>
            <person name="Chapman S."/>
            <person name="Coulson R."/>
            <person name="Coutinho P.M."/>
            <person name="Danchin E.G.J."/>
            <person name="Diener A."/>
            <person name="Gale L.R."/>
            <person name="Gardiner D.M."/>
            <person name="Goff S."/>
            <person name="Hammond-Kosack K.E."/>
            <person name="Hilburn K."/>
            <person name="Hua-Van A."/>
            <person name="Jonkers W."/>
            <person name="Kazan K."/>
            <person name="Kodira C.D."/>
            <person name="Koehrsen M."/>
            <person name="Kumar L."/>
            <person name="Lee Y.-H."/>
            <person name="Li L."/>
            <person name="Manners J.M."/>
            <person name="Miranda-Saavedra D."/>
            <person name="Mukherjee M."/>
            <person name="Park G."/>
            <person name="Park J."/>
            <person name="Park S.-Y."/>
            <person name="Proctor R.H."/>
            <person name="Regev A."/>
            <person name="Ruiz-Roldan M.C."/>
            <person name="Sain D."/>
            <person name="Sakthikumar S."/>
            <person name="Sykes S."/>
            <person name="Schwartz D.C."/>
            <person name="Turgeon B.G."/>
            <person name="Wapinski I."/>
            <person name="Yoder O."/>
            <person name="Young S."/>
            <person name="Zeng Q."/>
            <person name="Zhou S."/>
            <person name="Galagan J."/>
            <person name="Cuomo C.A."/>
            <person name="Kistler H.C."/>
            <person name="Rep M."/>
        </authorList>
    </citation>
    <scope>GENOME REANNOTATION</scope>
    <source>
        <strain>ATCC MYA-4620 / CBS 123657 / FGSC 9075 / NRRL 31084 / PH-1</strain>
    </source>
</reference>
<reference key="3">
    <citation type="journal article" date="2015" name="BMC Genomics">
        <title>The completed genome sequence of the pathogenic ascomycete fungus Fusarium graminearum.</title>
        <authorList>
            <person name="King R."/>
            <person name="Urban M."/>
            <person name="Hammond-Kosack M.C.U."/>
            <person name="Hassani-Pak K."/>
            <person name="Hammond-Kosack K.E."/>
        </authorList>
    </citation>
    <scope>NUCLEOTIDE SEQUENCE [LARGE SCALE GENOMIC DNA]</scope>
    <source>
        <strain>ATCC MYA-4620 / CBS 123657 / FGSC 9075 / NRRL 31084 / PH-1</strain>
    </source>
</reference>
<reference key="4">
    <citation type="journal article" date="2015" name="Plant Biotechnol. J.">
        <title>Host-induced gene silencing of an essential chitin synthase gene confers durable resistance to Fusarium head blight and seedling blight in wheat.</title>
        <authorList>
            <person name="Cheng W."/>
            <person name="Song X.S."/>
            <person name="Li H.P."/>
            <person name="Cao L.H."/>
            <person name="Sun K."/>
            <person name="Qiu X.L."/>
            <person name="Xu Y.B."/>
            <person name="Yang P."/>
            <person name="Huang T."/>
            <person name="Zhang J.B."/>
            <person name="Qu B."/>
            <person name="Liao Y.C."/>
        </authorList>
    </citation>
    <scope>FUNCTION</scope>
    <scope>DISRUPTION PHENOTYPE</scope>
</reference>
<reference key="5">
    <citation type="journal article" date="2016" name="Sci. Rep.">
        <title>The chitin synthase FgChs2 and other FgChss co-regulate vegetative development and virulence in F. graminearum.</title>
        <authorList>
            <person name="Liu Z."/>
            <person name="Zhang X."/>
            <person name="Liu X."/>
            <person name="Fu C."/>
            <person name="Han X."/>
            <person name="Yin Y."/>
            <person name="Ma Z."/>
        </authorList>
    </citation>
    <scope>FUNCTION</scope>
    <scope>INDUCTION</scope>
</reference>
<gene>
    <name evidence="6" type="primary">CHS4</name>
    <name type="ORF">FG01272</name>
    <name type="ORF">FGRAMPH1_01T03149</name>
</gene>
<accession>A0A0E0RQ52</accession>
<proteinExistence type="evidence at transcript level"/>
<organism>
    <name type="scientific">Gibberella zeae (strain ATCC MYA-4620 / CBS 123657 / FGSC 9075 / NRRL 31084 / PH-1)</name>
    <name type="common">Wheat head blight fungus</name>
    <name type="synonym">Fusarium graminearum</name>
    <dbReference type="NCBI Taxonomy" id="229533"/>
    <lineage>
        <taxon>Eukaryota</taxon>
        <taxon>Fungi</taxon>
        <taxon>Dikarya</taxon>
        <taxon>Ascomycota</taxon>
        <taxon>Pezizomycotina</taxon>
        <taxon>Sordariomycetes</taxon>
        <taxon>Hypocreomycetidae</taxon>
        <taxon>Hypocreales</taxon>
        <taxon>Nectriaceae</taxon>
        <taxon>Fusarium</taxon>
    </lineage>
</organism>
<feature type="chain" id="PRO_0000460796" description="Chitin synthase 4">
    <location>
        <begin position="1"/>
        <end position="1222"/>
    </location>
</feature>
<feature type="transmembrane region" description="Helical" evidence="1">
    <location>
        <begin position="205"/>
        <end position="225"/>
    </location>
</feature>
<feature type="transmembrane region" description="Helical" evidence="1">
    <location>
        <begin position="243"/>
        <end position="263"/>
    </location>
</feature>
<feature type="transmembrane region" description="Helical" evidence="1">
    <location>
        <begin position="513"/>
        <end position="533"/>
    </location>
</feature>
<feature type="transmembrane region" description="Helical" evidence="1">
    <location>
        <begin position="1055"/>
        <end position="1075"/>
    </location>
</feature>
<feature type="transmembrane region" description="Helical" evidence="1">
    <location>
        <begin position="1089"/>
        <end position="1109"/>
    </location>
</feature>
<feature type="transmembrane region" description="Helical" evidence="1">
    <location>
        <begin position="1113"/>
        <end position="1133"/>
    </location>
</feature>
<feature type="region of interest" description="Disordered" evidence="3">
    <location>
        <begin position="1"/>
        <end position="101"/>
    </location>
</feature>
<feature type="region of interest" description="Disordered" evidence="3">
    <location>
        <begin position="138"/>
        <end position="200"/>
    </location>
</feature>
<feature type="region of interest" description="Disordered" evidence="3">
    <location>
        <begin position="576"/>
        <end position="630"/>
    </location>
</feature>
<feature type="region of interest" description="Disordered" evidence="3">
    <location>
        <begin position="1202"/>
        <end position="1222"/>
    </location>
</feature>
<feature type="compositionally biased region" description="Polar residues" evidence="3">
    <location>
        <begin position="11"/>
        <end position="24"/>
    </location>
</feature>
<feature type="compositionally biased region" description="Polar residues" evidence="3">
    <location>
        <begin position="42"/>
        <end position="77"/>
    </location>
</feature>
<feature type="compositionally biased region" description="Basic residues" evidence="3">
    <location>
        <begin position="182"/>
        <end position="196"/>
    </location>
</feature>
<feature type="compositionally biased region" description="Polar residues" evidence="3">
    <location>
        <begin position="616"/>
        <end position="630"/>
    </location>
</feature>
<feature type="glycosylation site" description="N-linked (GlcNAc...) asparagine" evidence="2">
    <location>
        <position position="378"/>
    </location>
</feature>
<feature type="glycosylation site" description="N-linked (GlcNAc...) asparagine" evidence="2">
    <location>
        <position position="418"/>
    </location>
</feature>
<feature type="glycosylation site" description="N-linked (GlcNAc...) asparagine" evidence="2">
    <location>
        <position position="440"/>
    </location>
</feature>
<feature type="glycosylation site" description="N-linked (GlcNAc...) asparagine" evidence="2">
    <location>
        <position position="637"/>
    </location>
</feature>
<feature type="glycosylation site" description="N-linked (GlcNAc...) asparagine" evidence="2">
    <location>
        <position position="1030"/>
    </location>
</feature>
<keyword id="KW-1003">Cell membrane</keyword>
<keyword id="KW-0325">Glycoprotein</keyword>
<keyword id="KW-0328">Glycosyltransferase</keyword>
<keyword id="KW-0472">Membrane</keyword>
<keyword id="KW-1185">Reference proteome</keyword>
<keyword id="KW-0808">Transferase</keyword>
<keyword id="KW-0812">Transmembrane</keyword>
<keyword id="KW-1133">Transmembrane helix</keyword>
<keyword id="KW-0843">Virulence</keyword>
<name>CHS4_GIBZE</name>
<evidence type="ECO:0000255" key="1"/>
<evidence type="ECO:0000255" key="2">
    <source>
        <dbReference type="PROSITE-ProRule" id="PRU00498"/>
    </source>
</evidence>
<evidence type="ECO:0000256" key="3">
    <source>
        <dbReference type="SAM" id="MobiDB-lite"/>
    </source>
</evidence>
<evidence type="ECO:0000269" key="4">
    <source>
    </source>
</evidence>
<evidence type="ECO:0000269" key="5">
    <source>
    </source>
</evidence>
<evidence type="ECO:0000303" key="6">
    <source>
    </source>
</evidence>
<evidence type="ECO:0000305" key="7"/>
<evidence type="ECO:0000305" key="8">
    <source>
    </source>
</evidence>
<sequence>MSLPERPGASQAYNQRSVYRNSPSRRSRPVDIETGGYHAVDNQASHQRGKSGSSFAESIGINSNTESMPLSPTSPDGQSRHAGPEQPISRKRSLIRPERNRIDRDHRNYHYHKHAAHMNVLPSSTGNDPIYEDFEASTERTNSNYNEGGSDGSPRQRRTVSGDHEKSAAVASTLPTPDRTKSGKIKRKSRRHSKPPKRIEEQLRPPTFWNVYCAIVTFWAPGFIMKCCGMPTRAQQRAWREKMGLISIILIIMAIVGFLTFGFTATVCGAPQERLRVNKVDGGNMIFHGVAYDLSESHHPPAQGMPLRSDGLGPNVLYDLPEKNAGKDGSFLFQNVNGRCKGLITLAKGSDVPTNDDGDLAWYFPCKTFNQDGSSKVNTTTPYYSGYGCHTTLDSRNAFYLDLKGAADVYFTWDDIKNKSRNLVVYSGNVLDLDLLKWFNSTQVDIPERFKELRDKNSAVNKAIRGRDVTRMFQSSSDKKYAQCFEEIIKVGSVDTETIGCIASKIVLYCALALILSVVGVRFFLAIIFQWFICRKYAPTKTSQSSDRRKRNKQIEDWSEDIYRAPIRLPGDVGSTVYGSSDRSSKRASFLPTTSRFSSVGGPDIRSQGGRRMPTTMASQSTSNQLLTPNSMFKQGNDSRASFLRTDPYSSTPTDGPGPAGFIHDAVVPQPPSDWMPFGFPLAHTMCLVTAYSEGEEGIRTTLDSIATTDYPNSHKVIVVICDGIIKGQGETMSTPDVCLGMLKDHSIPPDMVEPFSYVAVASGSKRHNMAKIYCGFYDYGKNSRIPADRQQRVPMMVVVKCGTPDEASKSKPGNRGKRDSQIILMSFLQKVMFDERMTELEYEMFNGLWKVTGISPDYYEIILMVDADTKVFPDSLTHMISAMVKDPEIMGLCGETKIANKRDSWVTAIQVFEYFVSHHLAKSFESVFGGVTCLPGCFCMYRIKAPKGGHNYWVPILANPDIVEHYSENVVETLHEKNLYLLGEDRFLTTLMLRTFPKRKQVFIPQAVCKTTVPDEFMVLLSQRRRWINSTIHNLMELVLVRDLCGTFCFSMQFIIFVELVGTLVLPAAIAFTFYVVITSIINSPPQIIPLVLLGLILGLPGLLVIITAHSWSYIVWMLIYLLALPIWNFVLPTYAFWKFDDFSWGETRKTAGEKTKKAGLEYEGEFDSSKITMKRWAEFERDKRSRSGYWGSRENVIGGGGQTWTSPPGHQYNEEYYSDA</sequence>